<geneLocation type="mitochondrion"/>
<sequence length="318" mass="35692">MFMANLLLVILPALVAMAFLTLTERKVLGYMQFRKGPNIVGPYGMLQPFADAMKLFTKEPLLPTTSTSMLYLTAPALALSIALLLWTPLPMPXPLMNFNLGLLFILATSSLAVYSILWSGWASNSNYALIGALRAVAQTISYEVTLAIILLSVLLMSGSFNLQSLITTQEHSWLLFPSWPLAMMWFTSTLAETNRAPXDLTEGESELVSGFNIEYAXGSFALFFMGEYMNIIMMNALTTTIFLAASYNMMTPETYSINFMAKALLLTTLFLWIRAAYPRFRYDQLMHLLWKNFLPLTLALCMWYISMPTLTSSIPPQM</sequence>
<dbReference type="EC" id="7.1.1.2" evidence="1"/>
<dbReference type="EMBL" id="AY599497">
    <property type="protein sequence ID" value="AAU01578.1"/>
    <property type="molecule type" value="Genomic_DNA"/>
</dbReference>
<dbReference type="GO" id="GO:0005743">
    <property type="term" value="C:mitochondrial inner membrane"/>
    <property type="evidence" value="ECO:0000250"/>
    <property type="project" value="UniProtKB"/>
</dbReference>
<dbReference type="GO" id="GO:0008137">
    <property type="term" value="F:NADH dehydrogenase (ubiquinone) activity"/>
    <property type="evidence" value="ECO:0000250"/>
    <property type="project" value="UniProtKB"/>
</dbReference>
<dbReference type="GO" id="GO:0006120">
    <property type="term" value="P:mitochondrial electron transport, NADH to ubiquinone"/>
    <property type="evidence" value="ECO:0000250"/>
    <property type="project" value="UniProtKB"/>
</dbReference>
<dbReference type="GO" id="GO:0032981">
    <property type="term" value="P:mitochondrial respiratory chain complex I assembly"/>
    <property type="evidence" value="ECO:0000250"/>
    <property type="project" value="UniProtKB"/>
</dbReference>
<dbReference type="HAMAP" id="MF_01350">
    <property type="entry name" value="NDH1_NuoH"/>
    <property type="match status" value="1"/>
</dbReference>
<dbReference type="InterPro" id="IPR001694">
    <property type="entry name" value="NADH_UbQ_OxRdtase_su1/FPO"/>
</dbReference>
<dbReference type="InterPro" id="IPR018086">
    <property type="entry name" value="NADH_UbQ_OxRdtase_su1_CS"/>
</dbReference>
<dbReference type="PANTHER" id="PTHR11432">
    <property type="entry name" value="NADH DEHYDROGENASE SUBUNIT 1"/>
    <property type="match status" value="1"/>
</dbReference>
<dbReference type="PANTHER" id="PTHR11432:SF3">
    <property type="entry name" value="NADH-UBIQUINONE OXIDOREDUCTASE CHAIN 1"/>
    <property type="match status" value="1"/>
</dbReference>
<dbReference type="Pfam" id="PF00146">
    <property type="entry name" value="NADHdh"/>
    <property type="match status" value="1"/>
</dbReference>
<dbReference type="PROSITE" id="PS00667">
    <property type="entry name" value="COMPLEX1_ND1_1"/>
    <property type="match status" value="1"/>
</dbReference>
<dbReference type="PROSITE" id="PS00668">
    <property type="entry name" value="COMPLEX1_ND1_2"/>
    <property type="match status" value="1"/>
</dbReference>
<evidence type="ECO:0000250" key="1">
    <source>
        <dbReference type="UniProtKB" id="P03886"/>
    </source>
</evidence>
<evidence type="ECO:0000250" key="2">
    <source>
        <dbReference type="UniProtKB" id="P03887"/>
    </source>
</evidence>
<evidence type="ECO:0000255" key="3"/>
<evidence type="ECO:0000305" key="4"/>
<proteinExistence type="inferred from homology"/>
<accession>Q53AV2</accession>
<organism>
    <name type="scientific">Saguinus leucopus</name>
    <name type="common">Silvery-brown bare-face tamarin</name>
    <dbReference type="NCBI Taxonomy" id="290597"/>
    <lineage>
        <taxon>Eukaryota</taxon>
        <taxon>Metazoa</taxon>
        <taxon>Chordata</taxon>
        <taxon>Craniata</taxon>
        <taxon>Vertebrata</taxon>
        <taxon>Euteleostomi</taxon>
        <taxon>Mammalia</taxon>
        <taxon>Eutheria</taxon>
        <taxon>Euarchontoglires</taxon>
        <taxon>Primates</taxon>
        <taxon>Haplorrhini</taxon>
        <taxon>Platyrrhini</taxon>
        <taxon>Cebidae</taxon>
        <taxon>Callitrichinae</taxon>
        <taxon>Saguinus</taxon>
    </lineage>
</organism>
<feature type="chain" id="PRO_0000117471" description="NADH-ubiquinone oxidoreductase chain 1">
    <location>
        <begin position="1"/>
        <end position="318"/>
    </location>
</feature>
<feature type="transmembrane region" description="Helical" evidence="3">
    <location>
        <begin position="2"/>
        <end position="22"/>
    </location>
</feature>
<feature type="transmembrane region" description="Helical" evidence="3">
    <location>
        <begin position="69"/>
        <end position="89"/>
    </location>
</feature>
<feature type="transmembrane region" description="Helical" evidence="3">
    <location>
        <begin position="98"/>
        <end position="118"/>
    </location>
</feature>
<feature type="transmembrane region" description="Helical" evidence="3">
    <location>
        <begin position="140"/>
        <end position="160"/>
    </location>
</feature>
<feature type="transmembrane region" description="Helical" evidence="3">
    <location>
        <begin position="171"/>
        <end position="191"/>
    </location>
</feature>
<feature type="transmembrane region" description="Helical" evidence="3">
    <location>
        <begin position="222"/>
        <end position="242"/>
    </location>
</feature>
<feature type="transmembrane region" description="Helical" evidence="3">
    <location>
        <begin position="253"/>
        <end position="273"/>
    </location>
</feature>
<feature type="transmembrane region" description="Helical" evidence="3">
    <location>
        <begin position="285"/>
        <end position="305"/>
    </location>
</feature>
<reference key="1">
    <citation type="journal article" date="2005" name="Genet. Mol. Biol.">
        <title>Molecular phylogeny of the genus Saguinus (Platyrrhini, Primates) based on the ND1 mitochondrial gene and implications for conservation.</title>
        <authorList>
            <person name="Tagliaro C.H."/>
            <person name="Schneider H."/>
            <person name="Sampaio I."/>
            <person name="Schneider P."/>
            <person name="Vallinoto M."/>
            <person name="Stanhope M.J."/>
        </authorList>
    </citation>
    <scope>NUCLEOTIDE SEQUENCE [GENOMIC DNA]</scope>
</reference>
<protein>
    <recommendedName>
        <fullName>NADH-ubiquinone oxidoreductase chain 1</fullName>
        <ecNumber evidence="1">7.1.1.2</ecNumber>
    </recommendedName>
    <alternativeName>
        <fullName>NADH dehydrogenase subunit 1</fullName>
    </alternativeName>
</protein>
<name>NU1M_SAGLE</name>
<gene>
    <name type="primary">MT-ND1</name>
    <name type="synonym">MTND1</name>
    <name type="synonym">NADH1</name>
    <name type="synonym">ND1</name>
</gene>
<keyword id="KW-0249">Electron transport</keyword>
<keyword id="KW-0472">Membrane</keyword>
<keyword id="KW-0496">Mitochondrion</keyword>
<keyword id="KW-0999">Mitochondrion inner membrane</keyword>
<keyword id="KW-0520">NAD</keyword>
<keyword id="KW-0679">Respiratory chain</keyword>
<keyword id="KW-1278">Translocase</keyword>
<keyword id="KW-0812">Transmembrane</keyword>
<keyword id="KW-1133">Transmembrane helix</keyword>
<keyword id="KW-0813">Transport</keyword>
<keyword id="KW-0830">Ubiquinone</keyword>
<comment type="function">
    <text evidence="1">Core subunit of the mitochondrial membrane respiratory chain NADH dehydrogenase (Complex I) which catalyzes electron transfer from NADH through the respiratory chain, using ubiquinone as an electron acceptor. Essential for the catalytic activity and assembly of complex I.</text>
</comment>
<comment type="catalytic activity">
    <reaction evidence="1">
        <text>a ubiquinone + NADH + 5 H(+)(in) = a ubiquinol + NAD(+) + 4 H(+)(out)</text>
        <dbReference type="Rhea" id="RHEA:29091"/>
        <dbReference type="Rhea" id="RHEA-COMP:9565"/>
        <dbReference type="Rhea" id="RHEA-COMP:9566"/>
        <dbReference type="ChEBI" id="CHEBI:15378"/>
        <dbReference type="ChEBI" id="CHEBI:16389"/>
        <dbReference type="ChEBI" id="CHEBI:17976"/>
        <dbReference type="ChEBI" id="CHEBI:57540"/>
        <dbReference type="ChEBI" id="CHEBI:57945"/>
        <dbReference type="EC" id="7.1.1.2"/>
    </reaction>
</comment>
<comment type="subunit">
    <text evidence="2">Core subunit of respiratory chain NADH dehydrogenase (Complex I) which is composed of 45 different subunits.</text>
</comment>
<comment type="subcellular location">
    <subcellularLocation>
        <location evidence="2">Mitochondrion inner membrane</location>
        <topology evidence="3">Multi-pass membrane protein</topology>
    </subcellularLocation>
</comment>
<comment type="similarity">
    <text evidence="4">Belongs to the complex I subunit 1 family.</text>
</comment>